<organism>
    <name type="scientific">Staphylococcus aureus (strain JH1)</name>
    <dbReference type="NCBI Taxonomy" id="359787"/>
    <lineage>
        <taxon>Bacteria</taxon>
        <taxon>Bacillati</taxon>
        <taxon>Bacillota</taxon>
        <taxon>Bacilli</taxon>
        <taxon>Bacillales</taxon>
        <taxon>Staphylococcaceae</taxon>
        <taxon>Staphylococcus</taxon>
    </lineage>
</organism>
<gene>
    <name type="ordered locus">SaurJH1_1510</name>
</gene>
<proteinExistence type="inferred from homology"/>
<feature type="chain" id="PRO_1000087616" description="UPF0346 protein SaurJH1_1510">
    <location>
        <begin position="1"/>
        <end position="73"/>
    </location>
</feature>
<dbReference type="EMBL" id="CP000736">
    <property type="protein sequence ID" value="ABR52359.1"/>
    <property type="molecule type" value="Genomic_DNA"/>
</dbReference>
<dbReference type="SMR" id="A6U1P1"/>
<dbReference type="KEGG" id="sah:SaurJH1_1510"/>
<dbReference type="HOGENOM" id="CLU_177534_1_0_9"/>
<dbReference type="Gene3D" id="1.10.150.260">
    <property type="entry name" value="YozE SAM-like"/>
    <property type="match status" value="1"/>
</dbReference>
<dbReference type="HAMAP" id="MF_01538">
    <property type="entry name" value="UPF0346"/>
    <property type="match status" value="1"/>
</dbReference>
<dbReference type="InterPro" id="IPR010673">
    <property type="entry name" value="UPF0346"/>
</dbReference>
<dbReference type="InterPro" id="IPR023089">
    <property type="entry name" value="YozE_SAM-like"/>
</dbReference>
<dbReference type="InterPro" id="IPR036806">
    <property type="entry name" value="YozE_SAM-like_sf"/>
</dbReference>
<dbReference type="NCBIfam" id="NF010193">
    <property type="entry name" value="PRK13672.1"/>
    <property type="match status" value="1"/>
</dbReference>
<dbReference type="Pfam" id="PF06855">
    <property type="entry name" value="YozE_SAM_like"/>
    <property type="match status" value="1"/>
</dbReference>
<dbReference type="PIRSF" id="PIRSF037262">
    <property type="entry name" value="UCP037262"/>
    <property type="match status" value="1"/>
</dbReference>
<dbReference type="SUPFAM" id="SSF140652">
    <property type="entry name" value="YozE-like"/>
    <property type="match status" value="1"/>
</dbReference>
<reference key="1">
    <citation type="submission" date="2007-06" db="EMBL/GenBank/DDBJ databases">
        <title>Complete sequence of chromosome of Staphylococcus aureus subsp. aureus JH1.</title>
        <authorList>
            <consortium name="US DOE Joint Genome Institute"/>
            <person name="Copeland A."/>
            <person name="Lucas S."/>
            <person name="Lapidus A."/>
            <person name="Barry K."/>
            <person name="Detter J.C."/>
            <person name="Glavina del Rio T."/>
            <person name="Hammon N."/>
            <person name="Israni S."/>
            <person name="Dalin E."/>
            <person name="Tice H."/>
            <person name="Pitluck S."/>
            <person name="Chain P."/>
            <person name="Malfatti S."/>
            <person name="Shin M."/>
            <person name="Vergez L."/>
            <person name="Schmutz J."/>
            <person name="Larimer F."/>
            <person name="Land M."/>
            <person name="Hauser L."/>
            <person name="Kyrpides N."/>
            <person name="Ivanova N."/>
            <person name="Tomasz A."/>
            <person name="Richardson P."/>
        </authorList>
    </citation>
    <scope>NUCLEOTIDE SEQUENCE [LARGE SCALE GENOMIC DNA]</scope>
    <source>
        <strain>JH1</strain>
    </source>
</reference>
<sequence>MKNYSFYQFVMTVRGRHDDKGRLAEEIFDDLAFPKHDDDFNILSDYIETHGDFTLPMSVFDDLYEEYTEWLKF</sequence>
<protein>
    <recommendedName>
        <fullName evidence="1">UPF0346 protein SaurJH1_1510</fullName>
    </recommendedName>
</protein>
<name>Y1510_STAA2</name>
<evidence type="ECO:0000255" key="1">
    <source>
        <dbReference type="HAMAP-Rule" id="MF_01538"/>
    </source>
</evidence>
<accession>A6U1P1</accession>
<comment type="similarity">
    <text evidence="1">Belongs to the UPF0346 family.</text>
</comment>